<keyword id="KW-1003">Cell membrane</keyword>
<keyword id="KW-0285">Flavoprotein</keyword>
<keyword id="KW-0288">FMN</keyword>
<keyword id="KW-0472">Membrane</keyword>
<keyword id="KW-0560">Oxidoreductase</keyword>
<keyword id="KW-0665">Pyrimidine biosynthesis</keyword>
<keyword id="KW-1185">Reference proteome</keyword>
<evidence type="ECO:0000255" key="1">
    <source>
        <dbReference type="HAMAP-Rule" id="MF_00225"/>
    </source>
</evidence>
<evidence type="ECO:0000305" key="2"/>
<reference key="1">
    <citation type="journal article" date="2002" name="Proc. Natl. Acad. Sci. U.S.A.">
        <title>Extensive mosaic structure revealed by the complete genome sequence of uropathogenic Escherichia coli.</title>
        <authorList>
            <person name="Welch R.A."/>
            <person name="Burland V."/>
            <person name="Plunkett G. III"/>
            <person name="Redford P."/>
            <person name="Roesch P."/>
            <person name="Rasko D."/>
            <person name="Buckles E.L."/>
            <person name="Liou S.-R."/>
            <person name="Boutin A."/>
            <person name="Hackett J."/>
            <person name="Stroud D."/>
            <person name="Mayhew G.F."/>
            <person name="Rose D.J."/>
            <person name="Zhou S."/>
            <person name="Schwartz D.C."/>
            <person name="Perna N.T."/>
            <person name="Mobley H.L.T."/>
            <person name="Donnenberg M.S."/>
            <person name="Blattner F.R."/>
        </authorList>
    </citation>
    <scope>NUCLEOTIDE SEQUENCE [LARGE SCALE GENOMIC DNA]</scope>
    <source>
        <strain>CFT073 / ATCC 700928 / UPEC</strain>
    </source>
</reference>
<feature type="chain" id="PRO_0000148439" description="Dihydroorotate dehydrogenase (quinone)">
    <location>
        <begin position="1"/>
        <end position="336"/>
    </location>
</feature>
<feature type="active site" description="Nucleophile" evidence="1">
    <location>
        <position position="175"/>
    </location>
</feature>
<feature type="binding site" evidence="1">
    <location>
        <begin position="62"/>
        <end position="66"/>
    </location>
    <ligand>
        <name>FMN</name>
        <dbReference type="ChEBI" id="CHEBI:58210"/>
    </ligand>
</feature>
<feature type="binding site" evidence="1">
    <location>
        <position position="66"/>
    </location>
    <ligand>
        <name>substrate</name>
    </ligand>
</feature>
<feature type="binding site" evidence="1">
    <location>
        <position position="86"/>
    </location>
    <ligand>
        <name>FMN</name>
        <dbReference type="ChEBI" id="CHEBI:58210"/>
    </ligand>
</feature>
<feature type="binding site" evidence="1">
    <location>
        <begin position="111"/>
        <end position="115"/>
    </location>
    <ligand>
        <name>substrate</name>
    </ligand>
</feature>
<feature type="binding site" evidence="1">
    <location>
        <position position="139"/>
    </location>
    <ligand>
        <name>FMN</name>
        <dbReference type="ChEBI" id="CHEBI:58210"/>
    </ligand>
</feature>
<feature type="binding site" evidence="1">
    <location>
        <position position="172"/>
    </location>
    <ligand>
        <name>FMN</name>
        <dbReference type="ChEBI" id="CHEBI:58210"/>
    </ligand>
</feature>
<feature type="binding site" evidence="1">
    <location>
        <position position="172"/>
    </location>
    <ligand>
        <name>substrate</name>
    </ligand>
</feature>
<feature type="binding site" evidence="1">
    <location>
        <position position="177"/>
    </location>
    <ligand>
        <name>substrate</name>
    </ligand>
</feature>
<feature type="binding site" evidence="1">
    <location>
        <position position="217"/>
    </location>
    <ligand>
        <name>FMN</name>
        <dbReference type="ChEBI" id="CHEBI:58210"/>
    </ligand>
</feature>
<feature type="binding site" evidence="1">
    <location>
        <position position="245"/>
    </location>
    <ligand>
        <name>FMN</name>
        <dbReference type="ChEBI" id="CHEBI:58210"/>
    </ligand>
</feature>
<feature type="binding site" evidence="1">
    <location>
        <begin position="246"/>
        <end position="247"/>
    </location>
    <ligand>
        <name>substrate</name>
    </ligand>
</feature>
<feature type="binding site" evidence="1">
    <location>
        <position position="268"/>
    </location>
    <ligand>
        <name>FMN</name>
        <dbReference type="ChEBI" id="CHEBI:58210"/>
    </ligand>
</feature>
<feature type="binding site" evidence="1">
    <location>
        <position position="297"/>
    </location>
    <ligand>
        <name>FMN</name>
        <dbReference type="ChEBI" id="CHEBI:58210"/>
    </ligand>
</feature>
<feature type="binding site" evidence="1">
    <location>
        <begin position="318"/>
        <end position="319"/>
    </location>
    <ligand>
        <name>FMN</name>
        <dbReference type="ChEBI" id="CHEBI:58210"/>
    </ligand>
</feature>
<protein>
    <recommendedName>
        <fullName evidence="1">Dihydroorotate dehydrogenase (quinone)</fullName>
        <ecNumber evidence="1">1.3.5.2</ecNumber>
    </recommendedName>
    <alternativeName>
        <fullName evidence="1">DHOdehase</fullName>
        <shortName evidence="1">DHOD</shortName>
        <shortName evidence="1">DHODase</shortName>
    </alternativeName>
    <alternativeName>
        <fullName evidence="1">Dihydroorotate oxidase</fullName>
    </alternativeName>
</protein>
<name>PYRD_ECOL6</name>
<organism>
    <name type="scientific">Escherichia coli O6:H1 (strain CFT073 / ATCC 700928 / UPEC)</name>
    <dbReference type="NCBI Taxonomy" id="199310"/>
    <lineage>
        <taxon>Bacteria</taxon>
        <taxon>Pseudomonadati</taxon>
        <taxon>Pseudomonadota</taxon>
        <taxon>Gammaproteobacteria</taxon>
        <taxon>Enterobacterales</taxon>
        <taxon>Enterobacteriaceae</taxon>
        <taxon>Escherichia</taxon>
    </lineage>
</organism>
<dbReference type="EC" id="1.3.5.2" evidence="1"/>
<dbReference type="EMBL" id="AE014075">
    <property type="protein sequence ID" value="AAN79549.1"/>
    <property type="status" value="ALT_INIT"/>
    <property type="molecule type" value="Genomic_DNA"/>
</dbReference>
<dbReference type="RefSeq" id="WP_001295934.1">
    <property type="nucleotide sequence ID" value="NZ_CP051263.1"/>
</dbReference>
<dbReference type="SMR" id="Q8FJ91"/>
<dbReference type="STRING" id="199310.c1081"/>
<dbReference type="KEGG" id="ecc:c1081"/>
<dbReference type="eggNOG" id="COG0167">
    <property type="taxonomic scope" value="Bacteria"/>
</dbReference>
<dbReference type="HOGENOM" id="CLU_013640_2_0_6"/>
<dbReference type="UniPathway" id="UPA00070">
    <property type="reaction ID" value="UER00946"/>
</dbReference>
<dbReference type="Proteomes" id="UP000001410">
    <property type="component" value="Chromosome"/>
</dbReference>
<dbReference type="GO" id="GO:0005737">
    <property type="term" value="C:cytoplasm"/>
    <property type="evidence" value="ECO:0007669"/>
    <property type="project" value="InterPro"/>
</dbReference>
<dbReference type="GO" id="GO:0005886">
    <property type="term" value="C:plasma membrane"/>
    <property type="evidence" value="ECO:0007669"/>
    <property type="project" value="UniProtKB-SubCell"/>
</dbReference>
<dbReference type="GO" id="GO:0106430">
    <property type="term" value="F:dihydroorotate dehydrogenase (quinone) activity"/>
    <property type="evidence" value="ECO:0007669"/>
    <property type="project" value="UniProtKB-EC"/>
</dbReference>
<dbReference type="GO" id="GO:0006207">
    <property type="term" value="P:'de novo' pyrimidine nucleobase biosynthetic process"/>
    <property type="evidence" value="ECO:0007669"/>
    <property type="project" value="InterPro"/>
</dbReference>
<dbReference type="GO" id="GO:0044205">
    <property type="term" value="P:'de novo' UMP biosynthetic process"/>
    <property type="evidence" value="ECO:0007669"/>
    <property type="project" value="UniProtKB-UniRule"/>
</dbReference>
<dbReference type="CDD" id="cd04738">
    <property type="entry name" value="DHOD_2_like"/>
    <property type="match status" value="1"/>
</dbReference>
<dbReference type="FunFam" id="3.20.20.70:FF:000028">
    <property type="entry name" value="Dihydroorotate dehydrogenase (quinone)"/>
    <property type="match status" value="1"/>
</dbReference>
<dbReference type="Gene3D" id="3.20.20.70">
    <property type="entry name" value="Aldolase class I"/>
    <property type="match status" value="1"/>
</dbReference>
<dbReference type="HAMAP" id="MF_00225">
    <property type="entry name" value="DHO_dh_type2"/>
    <property type="match status" value="1"/>
</dbReference>
<dbReference type="InterPro" id="IPR013785">
    <property type="entry name" value="Aldolase_TIM"/>
</dbReference>
<dbReference type="InterPro" id="IPR050074">
    <property type="entry name" value="DHO_dehydrogenase"/>
</dbReference>
<dbReference type="InterPro" id="IPR012135">
    <property type="entry name" value="Dihydroorotate_DH_1_2"/>
</dbReference>
<dbReference type="InterPro" id="IPR005719">
    <property type="entry name" value="Dihydroorotate_DH_2"/>
</dbReference>
<dbReference type="InterPro" id="IPR005720">
    <property type="entry name" value="Dihydroorotate_DH_cat"/>
</dbReference>
<dbReference type="InterPro" id="IPR001295">
    <property type="entry name" value="Dihydroorotate_DH_CS"/>
</dbReference>
<dbReference type="NCBIfam" id="NF003644">
    <property type="entry name" value="PRK05286.1-1"/>
    <property type="match status" value="1"/>
</dbReference>
<dbReference type="NCBIfam" id="NF003645">
    <property type="entry name" value="PRK05286.1-2"/>
    <property type="match status" value="1"/>
</dbReference>
<dbReference type="NCBIfam" id="NF003646">
    <property type="entry name" value="PRK05286.1-4"/>
    <property type="match status" value="1"/>
</dbReference>
<dbReference type="NCBIfam" id="NF003652">
    <property type="entry name" value="PRK05286.2-5"/>
    <property type="match status" value="1"/>
</dbReference>
<dbReference type="NCBIfam" id="TIGR01036">
    <property type="entry name" value="pyrD_sub2"/>
    <property type="match status" value="1"/>
</dbReference>
<dbReference type="PANTHER" id="PTHR48109:SF4">
    <property type="entry name" value="DIHYDROOROTATE DEHYDROGENASE (QUINONE), MITOCHONDRIAL"/>
    <property type="match status" value="1"/>
</dbReference>
<dbReference type="PANTHER" id="PTHR48109">
    <property type="entry name" value="DIHYDROOROTATE DEHYDROGENASE (QUINONE), MITOCHONDRIAL-RELATED"/>
    <property type="match status" value="1"/>
</dbReference>
<dbReference type="Pfam" id="PF01180">
    <property type="entry name" value="DHO_dh"/>
    <property type="match status" value="1"/>
</dbReference>
<dbReference type="PIRSF" id="PIRSF000164">
    <property type="entry name" value="DHO_oxidase"/>
    <property type="match status" value="1"/>
</dbReference>
<dbReference type="SUPFAM" id="SSF51395">
    <property type="entry name" value="FMN-linked oxidoreductases"/>
    <property type="match status" value="1"/>
</dbReference>
<dbReference type="PROSITE" id="PS00911">
    <property type="entry name" value="DHODEHASE_1"/>
    <property type="match status" value="1"/>
</dbReference>
<dbReference type="PROSITE" id="PS00912">
    <property type="entry name" value="DHODEHASE_2"/>
    <property type="match status" value="1"/>
</dbReference>
<accession>Q8FJ91</accession>
<proteinExistence type="inferred from homology"/>
<sequence length="336" mass="36818">MYYPFVRKALFQLDPERAHEFTFQQLRRITGTPFEALVRQKVPAKPVNCMGLTFKNPLGLAAGLDKDGECIDALGAMGFGSIEIGTVTPRPQPGNDKPRLFRLVDAEGLINRMGFNNLGVDNLVENVKKAHYDGVLGINIGKNKDTPVEQGKDDYLICMEKIYAYAGYIAINISSPNTPGLRTLQYGEALDDLLTAIKNKQNDLQVMHHKYVPIAVKIAPDLSEEELIQVADSLVRHNIDGVIATNTTLDRSLVQGMKNCDQTGGLSGRPLQLKSTEIIRRLSQELNGRLPIIGVGGIDSVIAAREKIAAGASLVQIYSGFIFKGPPLIKEIVTHI</sequence>
<comment type="function">
    <text evidence="1">Catalyzes the conversion of dihydroorotate to orotate with quinone as electron acceptor.</text>
</comment>
<comment type="catalytic activity">
    <reaction evidence="1">
        <text>(S)-dihydroorotate + a quinone = orotate + a quinol</text>
        <dbReference type="Rhea" id="RHEA:30187"/>
        <dbReference type="ChEBI" id="CHEBI:24646"/>
        <dbReference type="ChEBI" id="CHEBI:30839"/>
        <dbReference type="ChEBI" id="CHEBI:30864"/>
        <dbReference type="ChEBI" id="CHEBI:132124"/>
        <dbReference type="EC" id="1.3.5.2"/>
    </reaction>
</comment>
<comment type="cofactor">
    <cofactor evidence="1">
        <name>FMN</name>
        <dbReference type="ChEBI" id="CHEBI:58210"/>
    </cofactor>
    <text evidence="1">Binds 1 FMN per subunit.</text>
</comment>
<comment type="pathway">
    <text evidence="1">Pyrimidine metabolism; UMP biosynthesis via de novo pathway; orotate from (S)-dihydroorotate (quinone route): step 1/1.</text>
</comment>
<comment type="subunit">
    <text evidence="1">Monomer.</text>
</comment>
<comment type="subcellular location">
    <subcellularLocation>
        <location evidence="1">Cell membrane</location>
        <topology evidence="1">Peripheral membrane protein</topology>
    </subcellularLocation>
</comment>
<comment type="similarity">
    <text evidence="1">Belongs to the dihydroorotate dehydrogenase family. Type 2 subfamily.</text>
</comment>
<comment type="sequence caution" evidence="2">
    <conflict type="erroneous initiation">
        <sequence resource="EMBL-CDS" id="AAN79549"/>
    </conflict>
</comment>
<gene>
    <name evidence="1" type="primary">pyrD</name>
    <name type="ordered locus">c1081</name>
</gene>